<dbReference type="EMBL" id="X08065">
    <property type="protein sequence ID" value="CAA30854.1"/>
    <property type="molecule type" value="Genomic_DNA"/>
</dbReference>
<dbReference type="EMBL" id="Z71266">
    <property type="protein sequence ID" value="CAA95848.1"/>
    <property type="molecule type" value="Genomic_DNA"/>
</dbReference>
<dbReference type="EMBL" id="Z71261">
    <property type="protein sequence ID" value="CAA95848.1"/>
    <property type="status" value="JOINED"/>
    <property type="molecule type" value="Genomic_DNA"/>
</dbReference>
<dbReference type="EMBL" id="M37232">
    <property type="protein sequence ID" value="AAA28119.1"/>
    <property type="molecule type" value="Genomic_DNA"/>
</dbReference>
<dbReference type="EMBL" id="M37234">
    <property type="protein sequence ID" value="AAA28120.1"/>
    <property type="molecule type" value="Genomic_DNA"/>
</dbReference>
<dbReference type="PIR" id="T21193">
    <property type="entry name" value="MWKW1"/>
</dbReference>
<dbReference type="RefSeq" id="NP_492053.1">
    <property type="nucleotide sequence ID" value="NM_059652.7"/>
</dbReference>
<dbReference type="SMR" id="P02567"/>
<dbReference type="BioGRID" id="37913">
    <property type="interactions" value="14"/>
</dbReference>
<dbReference type="DIP" id="DIP-24827N"/>
<dbReference type="FunCoup" id="P02567">
    <property type="interactions" value="152"/>
</dbReference>
<dbReference type="STRING" id="6239.R06C7.10.2"/>
<dbReference type="iPTMnet" id="P02567"/>
<dbReference type="PaxDb" id="6239-R06C7.10.1"/>
<dbReference type="PeptideAtlas" id="P02567"/>
<dbReference type="EnsemblMetazoa" id="R06C7.10.1">
    <property type="protein sequence ID" value="R06C7.10.1"/>
    <property type="gene ID" value="WBGene00002348"/>
</dbReference>
<dbReference type="GeneID" id="172471"/>
<dbReference type="KEGG" id="cel:CELE_R06C7.10"/>
<dbReference type="UCSC" id="R06C7.10.1">
    <property type="organism name" value="c. elegans"/>
</dbReference>
<dbReference type="AGR" id="WB:WBGene00002348"/>
<dbReference type="CTD" id="172471"/>
<dbReference type="WormBase" id="R06C7.10">
    <property type="protein sequence ID" value="CE06253"/>
    <property type="gene ID" value="WBGene00002348"/>
    <property type="gene designation" value="myo-1"/>
</dbReference>
<dbReference type="eggNOG" id="KOG0161">
    <property type="taxonomic scope" value="Eukaryota"/>
</dbReference>
<dbReference type="HOGENOM" id="CLU_000192_8_0_1"/>
<dbReference type="InParanoid" id="P02567"/>
<dbReference type="OMA" id="TWDWFLL"/>
<dbReference type="OrthoDB" id="312459at2759"/>
<dbReference type="PhylomeDB" id="P02567"/>
<dbReference type="PRO" id="PR:P02567"/>
<dbReference type="Proteomes" id="UP000001940">
    <property type="component" value="Chromosome I"/>
</dbReference>
<dbReference type="Bgee" id="WBGene00002348">
    <property type="expression patterns" value="Expressed in larva and 3 other cell types or tissues"/>
</dbReference>
<dbReference type="GO" id="GO:0005737">
    <property type="term" value="C:cytoplasm"/>
    <property type="evidence" value="ECO:0000318"/>
    <property type="project" value="GO_Central"/>
</dbReference>
<dbReference type="GO" id="GO:0032982">
    <property type="term" value="C:myosin filament"/>
    <property type="evidence" value="ECO:0000318"/>
    <property type="project" value="GO_Central"/>
</dbReference>
<dbReference type="GO" id="GO:0016460">
    <property type="term" value="C:myosin II complex"/>
    <property type="evidence" value="ECO:0000318"/>
    <property type="project" value="GO_Central"/>
</dbReference>
<dbReference type="GO" id="GO:0005863">
    <property type="term" value="C:striated muscle myosin thick filament"/>
    <property type="evidence" value="ECO:0000314"/>
    <property type="project" value="WormBase"/>
</dbReference>
<dbReference type="GO" id="GO:0051015">
    <property type="term" value="F:actin filament binding"/>
    <property type="evidence" value="ECO:0000318"/>
    <property type="project" value="GO_Central"/>
</dbReference>
<dbReference type="GO" id="GO:0005524">
    <property type="term" value="F:ATP binding"/>
    <property type="evidence" value="ECO:0007669"/>
    <property type="project" value="UniProtKB-KW"/>
</dbReference>
<dbReference type="GO" id="GO:0000146">
    <property type="term" value="F:microfilament motor activity"/>
    <property type="evidence" value="ECO:0000318"/>
    <property type="project" value="GO_Central"/>
</dbReference>
<dbReference type="GO" id="GO:0008307">
    <property type="term" value="F:structural constituent of muscle"/>
    <property type="evidence" value="ECO:0000314"/>
    <property type="project" value="WormBase"/>
</dbReference>
<dbReference type="GO" id="GO:0006936">
    <property type="term" value="P:muscle contraction"/>
    <property type="evidence" value="ECO:0000315"/>
    <property type="project" value="WormBase"/>
</dbReference>
<dbReference type="GO" id="GO:0043050">
    <property type="term" value="P:nematode pharyngeal pumping"/>
    <property type="evidence" value="ECO:0000315"/>
    <property type="project" value="WormBase"/>
</dbReference>
<dbReference type="GO" id="GO:0045214">
    <property type="term" value="P:sarcomere organization"/>
    <property type="evidence" value="ECO:0000318"/>
    <property type="project" value="GO_Central"/>
</dbReference>
<dbReference type="CDD" id="cd01377">
    <property type="entry name" value="MYSc_class_II"/>
    <property type="match status" value="1"/>
</dbReference>
<dbReference type="FunFam" id="1.10.10.820:FF:000001">
    <property type="entry name" value="Myosin heavy chain"/>
    <property type="match status" value="1"/>
</dbReference>
<dbReference type="FunFam" id="1.20.5.340:FF:000036">
    <property type="entry name" value="Myosin heavy chain"/>
    <property type="match status" value="1"/>
</dbReference>
<dbReference type="FunFam" id="1.20.5.370:FF:000008">
    <property type="entry name" value="Myosin heavy chain"/>
    <property type="match status" value="1"/>
</dbReference>
<dbReference type="FunFam" id="1.20.58.530:FF:000001">
    <property type="entry name" value="Myosin heavy chain"/>
    <property type="match status" value="1"/>
</dbReference>
<dbReference type="FunFam" id="1.20.5.370:FF:000009">
    <property type="entry name" value="Myosin heavy chain, isoform G"/>
    <property type="match status" value="1"/>
</dbReference>
<dbReference type="FunFam" id="3.40.850.10:FF:000024">
    <property type="entry name" value="Myosin heavy chain, isoform J"/>
    <property type="match status" value="1"/>
</dbReference>
<dbReference type="FunFam" id="1.20.120.720:FF:000001">
    <property type="entry name" value="Myosin heavy chain, muscle"/>
    <property type="match status" value="1"/>
</dbReference>
<dbReference type="FunFam" id="1.20.5.340:FF:000064">
    <property type="entry name" value="Protein CBR-LET-75"/>
    <property type="match status" value="1"/>
</dbReference>
<dbReference type="Gene3D" id="1.10.10.820">
    <property type="match status" value="1"/>
</dbReference>
<dbReference type="Gene3D" id="1.20.5.340">
    <property type="match status" value="3"/>
</dbReference>
<dbReference type="Gene3D" id="1.20.5.370">
    <property type="match status" value="3"/>
</dbReference>
<dbReference type="Gene3D" id="1.20.58.530">
    <property type="match status" value="1"/>
</dbReference>
<dbReference type="Gene3D" id="6.20.240.20">
    <property type="match status" value="1"/>
</dbReference>
<dbReference type="Gene3D" id="3.40.850.10">
    <property type="entry name" value="Kinesin motor domain"/>
    <property type="match status" value="1"/>
</dbReference>
<dbReference type="Gene3D" id="2.30.30.360">
    <property type="entry name" value="Myosin S1 fragment, N-terminal"/>
    <property type="match status" value="1"/>
</dbReference>
<dbReference type="Gene3D" id="1.20.120.720">
    <property type="entry name" value="Myosin VI head, motor domain, U50 subdomain"/>
    <property type="match status" value="1"/>
</dbReference>
<dbReference type="Gene3D" id="4.10.270.10">
    <property type="entry name" value="Myosin, subunit A"/>
    <property type="match status" value="1"/>
</dbReference>
<dbReference type="Gene3D" id="1.20.5.1160">
    <property type="entry name" value="Vasodilator-stimulated phosphoprotein"/>
    <property type="match status" value="1"/>
</dbReference>
<dbReference type="InterPro" id="IPR036961">
    <property type="entry name" value="Kinesin_motor_dom_sf"/>
</dbReference>
<dbReference type="InterPro" id="IPR001609">
    <property type="entry name" value="Myosin_head_motor_dom-like"/>
</dbReference>
<dbReference type="InterPro" id="IPR004009">
    <property type="entry name" value="Myosin_N"/>
</dbReference>
<dbReference type="InterPro" id="IPR008989">
    <property type="entry name" value="Myosin_S1_N"/>
</dbReference>
<dbReference type="InterPro" id="IPR002928">
    <property type="entry name" value="Myosin_tail"/>
</dbReference>
<dbReference type="InterPro" id="IPR027417">
    <property type="entry name" value="P-loop_NTPase"/>
</dbReference>
<dbReference type="InterPro" id="IPR014751">
    <property type="entry name" value="XRCC4-like_C"/>
</dbReference>
<dbReference type="PANTHER" id="PTHR13140">
    <property type="entry name" value="MYOSIN"/>
    <property type="match status" value="1"/>
</dbReference>
<dbReference type="PANTHER" id="PTHR13140:SF857">
    <property type="entry name" value="MYOSIN-11"/>
    <property type="match status" value="1"/>
</dbReference>
<dbReference type="Pfam" id="PF00063">
    <property type="entry name" value="Myosin_head"/>
    <property type="match status" value="1"/>
</dbReference>
<dbReference type="Pfam" id="PF02736">
    <property type="entry name" value="Myosin_N"/>
    <property type="match status" value="1"/>
</dbReference>
<dbReference type="Pfam" id="PF01576">
    <property type="entry name" value="Myosin_tail_1"/>
    <property type="match status" value="1"/>
</dbReference>
<dbReference type="PRINTS" id="PR00193">
    <property type="entry name" value="MYOSINHEAVY"/>
</dbReference>
<dbReference type="SMART" id="SM00242">
    <property type="entry name" value="MYSc"/>
    <property type="match status" value="1"/>
</dbReference>
<dbReference type="SUPFAM" id="SSF90257">
    <property type="entry name" value="Myosin rod fragments"/>
    <property type="match status" value="4"/>
</dbReference>
<dbReference type="SUPFAM" id="SSF52540">
    <property type="entry name" value="P-loop containing nucleoside triphosphate hydrolases"/>
    <property type="match status" value="1"/>
</dbReference>
<dbReference type="PROSITE" id="PS51456">
    <property type="entry name" value="MYOSIN_MOTOR"/>
    <property type="match status" value="1"/>
</dbReference>
<dbReference type="PROSITE" id="PS51844">
    <property type="entry name" value="SH3_LIKE"/>
    <property type="match status" value="1"/>
</dbReference>
<proteinExistence type="evidence at protein level"/>
<name>MYO1_CAEEL</name>
<reference key="1">
    <citation type="journal article" date="1989" name="J. Mol. Biol.">
        <title>Sequence analysis of the complete Caenorhabditis elegans myosin heavy chain gene family.</title>
        <authorList>
            <person name="Dibb N.J."/>
            <person name="Maruyama I.N."/>
            <person name="Krause M."/>
            <person name="Karn J."/>
        </authorList>
    </citation>
    <scope>NUCLEOTIDE SEQUENCE [GENOMIC DNA]</scope>
    <source>
        <strain>Bristol N2</strain>
    </source>
</reference>
<reference key="2">
    <citation type="journal article" date="1998" name="Science">
        <title>Genome sequence of the nematode C. elegans: a platform for investigating biology.</title>
        <authorList>
            <consortium name="The C. elegans sequencing consortium"/>
        </authorList>
    </citation>
    <scope>NUCLEOTIDE SEQUENCE [LARGE SCALE GENOMIC DNA]</scope>
    <source>
        <strain>Bristol N2</strain>
    </source>
</reference>
<reference key="3">
    <citation type="journal article" date="1983" name="Proc. Natl. Acad. Sci. U.S.A.">
        <title>Protein structural domains in the Caenorhabditis elegans unc-54 myosin heavy chain gene are not separated by introns.</title>
        <authorList>
            <person name="Karn J."/>
            <person name="Brenner S."/>
            <person name="Barnett L."/>
        </authorList>
    </citation>
    <scope>NUCLEOTIDE SEQUENCE [GENOMIC DNA] OF 34-1795</scope>
</reference>
<reference key="4">
    <citation type="journal article" date="1985" name="Cell Muscle Motil.">
        <title>Cloning nematode myosin genes.</title>
        <authorList>
            <person name="Karn J."/>
            <person name="Dibb N.J."/>
            <person name="Miller D.M."/>
        </authorList>
    </citation>
    <scope>NUCLEOTIDE SEQUENCE [GENOMIC DNA] OF 115-365 AND 1492-1763</scope>
</reference>
<reference key="5">
    <citation type="journal article" date="2002" name="Curr. Biol.">
        <title>A direct interaction between IP(3) receptors and myosin II regulates IP(3) signaling in C. elegans.</title>
        <authorList>
            <person name="Walker D.S."/>
            <person name="Ly S."/>
            <person name="Lockwood K.C."/>
            <person name="Baylis H.A."/>
        </authorList>
    </citation>
    <scope>INTERACTION WITH ITR-1</scope>
</reference>
<organism>
    <name type="scientific">Caenorhabditis elegans</name>
    <dbReference type="NCBI Taxonomy" id="6239"/>
    <lineage>
        <taxon>Eukaryota</taxon>
        <taxon>Metazoa</taxon>
        <taxon>Ecdysozoa</taxon>
        <taxon>Nematoda</taxon>
        <taxon>Chromadorea</taxon>
        <taxon>Rhabditida</taxon>
        <taxon>Rhabditina</taxon>
        <taxon>Rhabditomorpha</taxon>
        <taxon>Rhabditoidea</taxon>
        <taxon>Rhabditidae</taxon>
        <taxon>Peloderinae</taxon>
        <taxon>Caenorhabditis</taxon>
    </lineage>
</organism>
<protein>
    <recommendedName>
        <fullName evidence="9">Myosin-1</fullName>
    </recommendedName>
    <alternativeName>
        <fullName evidence="7">Myosin heavy chain D</fullName>
        <shortName evidence="7">MHC D</shortName>
    </alternativeName>
</protein>
<sequence length="1938" mass="223323">MSLEHEKDPGWQYLKRSREQQLADQSRPYDSKKNVWIPDAEEGYIEGVIKGPGPKADTVIVTAGGKDVTLKKDIVQEVNPPKFEKTEDMSNLTFLNDASVLWNLRSRYAAMLIYTYSGLFCVVINPYKRLPIYTDSVARMFMGKRRTEMPPHLFAVSDQAYRYMLQDHENQSMLITGESGAGKTENTKKVICYFATVGASQKAALKEGEKEVTLEDQIVQTNPVLEAFGNAKTVRNNNSSRFGKFIRIHFNKHGTLASCDIEHYLLEKSRVIRQAPGERCYHIFYQIYSDFKPQLRDELLLNHPISNYWFVAQAELLIDGIDDTEEFQLTDEAFDVLKFSPTEKMDCYRLMSAHMHMGNMKFKQRPREEQAEPDGQDEAERACNMYGIDVDQFLKALVSPRVKVGTEWVSKGQNVDQVHWAIGAMAKGLYARVFHWLVKKCNLTLDQKGIDRDYFIGVLDIAGFEIFDFNSFEQLWINFVNEKLQQFFNHHMFVLEQEEYAREGIQWTFIDFGLDLQACIELIEKPLGIISMLDEECIVPKATDMTLAQKLTDQHLGKHPNFEKPKPPKGKQGEAHFAMRHYAGTVRYNVLNWLEKNKDPLNDTVVSVMKASKKNDLLVEIWQDYTTQEEAAAAAKAGGGRKGGKSGSFMTVSMMYRESLNKLMTMLHKTHPHFIRCIIPNEKKQSGMIDAALVLNQLTCNGVLEGIRICRKGFPNRTQHPDFVQRYAILAAKEAKSSDDMKTCAGAILQALINQKQLNDEQFRIGHTKVFFKAGVVAHIEDLRDDKLNQIITGFQSAIRWYTATADAGARRKQLNSYIILQRNIRSWCVLRTWDWFLLFGKLRPQLKCGKMAEEMIKMAEEQKVLEAEAKKAESARKSQEEAYAKLSAERSKLLEALELTQGGSAAIEEKLTRLNSARQEVEKSLNDANDRLSEHEEKNADLEKQRRKAQQEVENLKKSIEAVDGNLAKSLEEKAAKENQIHSLQDEMNSQDETIGKINKEKKLLEENNRQLVDDLQAEEAKQAQANRLRGKLEQTLDEMEEAVEREKRIRAETEKSKRKVEGELKGAQETIDELSAIKLETDASLKKKEADIHALGVRIEDEQALANRLTRQSKENAQRIIEIEDELEHERQSRSKADRARAELQRELDELNERLDEQNKQLEIQQDNNKKKDSEIIKFRRDLDEKNMANEDQMAMIRRKNNDQISALTNTLDALQKSKAKIEKEKGVLQKELDDINAQVDQETKSRVEQERLAKQYEIQVAELQQKVDEQSRQIGEYTSTKGRLSNDNSDLARQVEELEIHLATINRAKTAFSSQLVEAKKAAEDELHERQEFHAACKNLEHELDQCHELLEEQINGKDDIQRQLSRINSEISQWKARYEGEGLVGSEELEELKRKQMNRVMDLQEALSAAQNKVISLEKAKGKLLAETEDARSDVDRHLTVIASLEKKQRAFDKIVDDWKRKVDDIQKEIDATTRDSRNTSTEVFKLRSSMDNLSEQIETLRRENKIFSQEIRDINEQITQGGRTYQEVHKSVRRLEQEKDELQHALDEAEAALEAEESKVLRLQIEVQQIRSEIEKRIQEKEEEFENTRKNHQRALESIQASLETEAKSKAELARAKKKLETDINQLEIALDHANKANVDAQKNLKKLFDQVKELQGQVDDEQRRREEIRENYLAAEKRLAIALSESEDLAHRIEASDKHKKQLEIEQAELKSSNTELIGNNAALSAMKRKVENEVQIARNELDEYLNELKASEERARKAAADADRLAEEVRQEQEHAVHVDRQRKSLELNAKELQAKIDDAERAMIQFGAKALAKVEDRVRSLEAELHSEQRRHQESIKGYTKQERRARELQFQVEEDKKAFDRLQENVEKLQQKIRVQKRQIEEAEEVATQNLSKFRQIQLALENAEERAEVAENSLVRMRGQVVRSATNK</sequence>
<gene>
    <name evidence="9" type="primary">myo-1</name>
    <name evidence="9" type="ORF">R06C7.10</name>
</gene>
<keyword id="KW-0009">Actin-binding</keyword>
<keyword id="KW-0067">ATP-binding</keyword>
<keyword id="KW-0175">Coiled coil</keyword>
<keyword id="KW-0963">Cytoplasm</keyword>
<keyword id="KW-0488">Methylation</keyword>
<keyword id="KW-0505">Motor protein</keyword>
<keyword id="KW-0514">Muscle protein</keyword>
<keyword id="KW-0518">Myosin</keyword>
<keyword id="KW-0547">Nucleotide-binding</keyword>
<keyword id="KW-1185">Reference proteome</keyword>
<keyword id="KW-0787">Thick filament</keyword>
<evidence type="ECO:0000250" key="1"/>
<evidence type="ECO:0000255" key="2"/>
<evidence type="ECO:0000255" key="3">
    <source>
        <dbReference type="PROSITE-ProRule" id="PRU00782"/>
    </source>
</evidence>
<evidence type="ECO:0000255" key="4">
    <source>
        <dbReference type="PROSITE-ProRule" id="PRU01190"/>
    </source>
</evidence>
<evidence type="ECO:0000256" key="5">
    <source>
        <dbReference type="SAM" id="MobiDB-lite"/>
    </source>
</evidence>
<evidence type="ECO:0000269" key="6">
    <source>
    </source>
</evidence>
<evidence type="ECO:0000303" key="7">
    <source>
    </source>
</evidence>
<evidence type="ECO:0000305" key="8"/>
<evidence type="ECO:0000312" key="9">
    <source>
        <dbReference type="WormBase" id="R06C7.10"/>
    </source>
</evidence>
<comment type="function">
    <text>Muscle contraction.</text>
</comment>
<comment type="subunit">
    <text evidence="6">Muscle myosin is a hexameric protein that consists of 2 heavy chain subunits (MHC), 2 alkali light chain subunits (MLC) and 2 regulatory light chain subunits (MLC-2). Interacts with itr-1 (via c-terminal coiled coil domain).</text>
</comment>
<comment type="subcellular location">
    <subcellularLocation>
        <location>Cytoplasm</location>
        <location>Myofibril</location>
    </subcellularLocation>
    <text>Thick filaments of the myofibrils.</text>
</comment>
<comment type="tissue specificity">
    <text>Found exclusively in the pharyngeal muscle.</text>
</comment>
<comment type="domain">
    <text>The rodlike tail sequence is highly repetitive, showing cycles of a 28-residue repeat pattern composed of 4 heptapeptides, characteristic for alpha-helical coiled coils.</text>
</comment>
<comment type="domain">
    <text evidence="8">Limited proteolysis of myosin heavy chain produces 1 light meromyosin (LMM) and 1 heavy meromyosin (HMM). HMM can be further cleaved into 2 globular subfragments (S1) and 1 rod-shaped subfragment (S2).</text>
</comment>
<comment type="miscellaneous">
    <text>There are four different myosin heavy chains in C.elegans.</text>
</comment>
<comment type="similarity">
    <text evidence="8">Belongs to the TRAFAC class myosin-kinesin ATPase superfamily. Myosin family.</text>
</comment>
<feature type="chain" id="PRO_0000123380" description="Myosin-1">
    <location>
        <begin position="1"/>
        <end position="1938"/>
    </location>
</feature>
<feature type="domain" description="Myosin N-terminal SH3-like" evidence="4">
    <location>
        <begin position="30"/>
        <end position="80"/>
    </location>
</feature>
<feature type="domain" description="Myosin motor" evidence="3">
    <location>
        <begin position="84"/>
        <end position="785"/>
    </location>
</feature>
<feature type="region of interest" description="Disordered" evidence="5">
    <location>
        <begin position="1"/>
        <end position="27"/>
    </location>
</feature>
<feature type="region of interest" description="Actin-binding">
    <location>
        <begin position="660"/>
        <end position="682"/>
    </location>
</feature>
<feature type="region of interest" description="Actin-binding">
    <location>
        <begin position="764"/>
        <end position="778"/>
    </location>
</feature>
<feature type="region of interest" description="Rodlike tail (S2 and LMM domains)">
    <location>
        <begin position="846"/>
        <end position="1938"/>
    </location>
</feature>
<feature type="region of interest" description="Alpha-helical tailpiece (short S2)">
    <location>
        <begin position="846"/>
        <end position="1170"/>
    </location>
</feature>
<feature type="region of interest" description="Disordered" evidence="5">
    <location>
        <begin position="919"/>
        <end position="951"/>
    </location>
</feature>
<feature type="region of interest" description="Light meromyosin (LMM)">
    <location>
        <begin position="1171"/>
        <end position="1938"/>
    </location>
</feature>
<feature type="coiled-coil region" evidence="2">
    <location>
        <begin position="846"/>
        <end position="1938"/>
    </location>
</feature>
<feature type="compositionally biased region" description="Basic and acidic residues" evidence="5">
    <location>
        <begin position="16"/>
        <end position="27"/>
    </location>
</feature>
<feature type="compositionally biased region" description="Basic and acidic residues" evidence="5">
    <location>
        <begin position="920"/>
        <end position="951"/>
    </location>
</feature>
<feature type="binding site" evidence="1">
    <location>
        <begin position="177"/>
        <end position="184"/>
    </location>
    <ligand>
        <name>ATP</name>
        <dbReference type="ChEBI" id="CHEBI:30616"/>
    </ligand>
</feature>
<feature type="modified residue" description="N6,N6,N6-trimethyllysine" evidence="2">
    <location>
        <position position="128"/>
    </location>
</feature>
<feature type="sequence conflict" description="In Ref. 3; no nucleotide entry." evidence="8" ref="3">
    <original>F</original>
    <variation>E</variation>
    <location>
        <position position="94"/>
    </location>
</feature>
<feature type="sequence conflict" description="In Ref. 3; no nucleotide entry." evidence="8" ref="3">
    <original>A</original>
    <variation>R</variation>
    <location>
        <position position="98"/>
    </location>
</feature>
<feature type="sequence conflict" description="In Ref. 1; CAA30854." evidence="8" ref="1">
    <original>D</original>
    <variation>V</variation>
    <location>
        <position position="377"/>
    </location>
</feature>
<feature type="sequence conflict" description="In Ref. 3; no nucleotide entry." evidence="8" ref="3">
    <original>DV</original>
    <variation>GD</variation>
    <location>
        <begin position="389"/>
        <end position="390"/>
    </location>
</feature>
<feature type="sequence conflict" description="In Ref. 1; CAA30854." evidence="8" ref="1">
    <original>D</original>
    <variation>V</variation>
    <location>
        <position position="391"/>
    </location>
</feature>
<feature type="sequence conflict" description="In Ref. 3; no nucleotide entry." evidence="8" ref="3">
    <original>W</original>
    <variation>N</variation>
    <location>
        <position position="408"/>
    </location>
</feature>
<feature type="sequence conflict" description="In Ref. 3; no nucleotide entry." evidence="8" ref="3">
    <original>Q</original>
    <variation>G</variation>
    <location>
        <position position="474"/>
    </location>
</feature>
<feature type="sequence conflict" description="In Ref. 1; CAA30854." evidence="8" ref="1">
    <original>F</original>
    <variation>L</variation>
    <location>
        <position position="577"/>
    </location>
</feature>
<feature type="sequence conflict" description="In Ref. 1; CAA30854." evidence="8" ref="1">
    <original>N</original>
    <variation>I</variation>
    <location>
        <position position="681"/>
    </location>
</feature>
<feature type="sequence conflict" description="In Ref. 3; no nucleotide entry." evidence="8" ref="3">
    <original>S</original>
    <variation>D</variation>
    <location>
        <position position="1373"/>
    </location>
</feature>
<feature type="sequence conflict" description="In Ref. 4; AAA28120." evidence="8" ref="4">
    <original>E</original>
    <variation>Q</variation>
    <location>
        <position position="1659"/>
    </location>
</feature>
<accession>P02567</accession>
<accession>Q19674</accession>